<organism>
    <name type="scientific">Drimys granadensis</name>
    <dbReference type="NCBI Taxonomy" id="224735"/>
    <lineage>
        <taxon>Eukaryota</taxon>
        <taxon>Viridiplantae</taxon>
        <taxon>Streptophyta</taxon>
        <taxon>Embryophyta</taxon>
        <taxon>Tracheophyta</taxon>
        <taxon>Spermatophyta</taxon>
        <taxon>Magnoliopsida</taxon>
        <taxon>Magnoliidae</taxon>
        <taxon>Canellales</taxon>
        <taxon>Winteraceae</taxon>
        <taxon>Drimys</taxon>
    </lineage>
</organism>
<sequence length="1071" mass="120597">MLRDGNEGMFTIPGFSQIQFEGFFRFIDQGLTEELHKFPKIEDTDQEIEFQLFVDTYRLVEPLIKERDAVYESLTYSSELYVPAGLIWKTGRDMQEQTIFIGNIPLMNSLGTSIVNGIYRIVINQILQSPGIYYRSELDHNGISVYTGSIISDWGGRSELEIDRKARIWARVSRKQKISILVPSSAMGSNLREILDNVCYPEIFLSFPNEKEKKKIGSRENAILEFYQQFACVGGDPVFSESLCKELQKKFFQQRCELGRIGRRNMNWRLNLDIPQNNLFLLPRDVLAAADHLIGMKFGMGTLDDMNHLKNKRIRSVADLLQDQFGLALVRLENVVRGTICGAIRHKLIPTPHNLVTSTPLTTTYESFFGLHPLSQVLDRTNPLTQIVHGRKSSYLGPGGLTGRTASFRIRDIHPSHYGRICPIDTSEGINVGLIGSLAIHARIGYLGSIESPFYEISQRSKEVQTVYLSPNRDEYYMVAAGNSLALNQGIQEEQVVPARYRQEFLTIAWEQIHLRSIFPFQYFSIGASLIPFIEHNDANRALMSSNMQRQAVPLSRSEKCIVGTGLERQAALDSGVSAIAEQDGKIIYTDTDKIVLSGNGDTAISIPLVIYQRSNKNTCMHQKPQVPRGKCLKKGQILADGAATVGGELALGKNVLVSYMPWEGYNFEDAVLISERLVYGDIYTSFHIRKYEIQTHVTSQGPERITNEIPHLEAHLLRNLDINGIVMLGSWIETGDILVGKLTPQTAKESSYAPEDRLLRAILGIQVSTAKETCLKLPIGGRGRVIDVRWIQKGGGSSYNPEMIRVYISQKREIKVGDKVAGRHGNKGIISKILPRQDMPYLQDGTPVDMVFNPLGVPSRMNVGQIFECSLGLAGDLLDRHYRIAPFDERYEQEASRKLVFPELYEASKQTANPWVFEPEYPGKSRIFDGRTGDPFEQPVIIGKSYILKLIHQVDDKIHGRSSGHYALVTQQPLRGRAKQGGQRVGEMEVWALEGFGVAHISQEMLTYKSDHIRARQEVLGTTIIGGTIPNPEDAPESFRLLVRELRSLALELNHFLVSEKNFQIHRKEA</sequence>
<geneLocation type="chloroplast"/>
<reference key="1">
    <citation type="journal article" date="2006" name="BMC Evol. Biol.">
        <title>Complete plastid genome sequences of Drimys, Liriodendron, and Piper: implications for the phylogenetic relationships of magnoliids.</title>
        <authorList>
            <person name="Cai Z."/>
            <person name="Penaflor C."/>
            <person name="Kuehl J.V."/>
            <person name="Leebens-Mack J."/>
            <person name="Carlson J.E."/>
            <person name="dePamphilis C.W."/>
            <person name="Boore J.L."/>
            <person name="Jansen R.K."/>
        </authorList>
    </citation>
    <scope>NUCLEOTIDE SEQUENCE [LARGE SCALE GENOMIC DNA]</scope>
</reference>
<keyword id="KW-0150">Chloroplast</keyword>
<keyword id="KW-0240">DNA-directed RNA polymerase</keyword>
<keyword id="KW-0548">Nucleotidyltransferase</keyword>
<keyword id="KW-0934">Plastid</keyword>
<keyword id="KW-0804">Transcription</keyword>
<keyword id="KW-0808">Transferase</keyword>
<name>RPOB_DRIGR</name>
<gene>
    <name evidence="1" type="primary">rpoB</name>
</gene>
<proteinExistence type="inferred from homology"/>
<comment type="function">
    <text evidence="1">DNA-dependent RNA polymerase catalyzes the transcription of DNA into RNA using the four ribonucleoside triphosphates as substrates.</text>
</comment>
<comment type="catalytic activity">
    <reaction evidence="1">
        <text>RNA(n) + a ribonucleoside 5'-triphosphate = RNA(n+1) + diphosphate</text>
        <dbReference type="Rhea" id="RHEA:21248"/>
        <dbReference type="Rhea" id="RHEA-COMP:14527"/>
        <dbReference type="Rhea" id="RHEA-COMP:17342"/>
        <dbReference type="ChEBI" id="CHEBI:33019"/>
        <dbReference type="ChEBI" id="CHEBI:61557"/>
        <dbReference type="ChEBI" id="CHEBI:140395"/>
        <dbReference type="EC" id="2.7.7.6"/>
    </reaction>
</comment>
<comment type="subunit">
    <text evidence="1">In plastids the minimal PEP RNA polymerase catalytic core is composed of four subunits: alpha, beta, beta', and beta''. When a (nuclear-encoded) sigma factor is associated with the core the holoenzyme is formed, which can initiate transcription.</text>
</comment>
<comment type="subcellular location">
    <subcellularLocation>
        <location>Plastid</location>
        <location>Chloroplast</location>
    </subcellularLocation>
</comment>
<comment type="similarity">
    <text evidence="1">Belongs to the RNA polymerase beta chain family.</text>
</comment>
<feature type="chain" id="PRO_0000276587" description="DNA-directed RNA polymerase subunit beta">
    <location>
        <begin position="1"/>
        <end position="1071"/>
    </location>
</feature>
<protein>
    <recommendedName>
        <fullName evidence="1">DNA-directed RNA polymerase subunit beta</fullName>
        <ecNumber evidence="1">2.7.7.6</ecNumber>
    </recommendedName>
    <alternativeName>
        <fullName evidence="1">PEP</fullName>
    </alternativeName>
    <alternativeName>
        <fullName evidence="1">Plastid-encoded RNA polymerase subunit beta</fullName>
        <shortName evidence="1">RNA polymerase subunit beta</shortName>
    </alternativeName>
</protein>
<dbReference type="EC" id="2.7.7.6" evidence="1"/>
<dbReference type="EMBL" id="DQ887676">
    <property type="protein sequence ID" value="ABH88289.1"/>
    <property type="molecule type" value="Genomic_DNA"/>
</dbReference>
<dbReference type="RefSeq" id="YP_784378.1">
    <property type="nucleotide sequence ID" value="NC_008456.1"/>
</dbReference>
<dbReference type="SMR" id="Q06H05"/>
<dbReference type="GeneID" id="4363553"/>
<dbReference type="GO" id="GO:0009507">
    <property type="term" value="C:chloroplast"/>
    <property type="evidence" value="ECO:0007669"/>
    <property type="project" value="UniProtKB-SubCell"/>
</dbReference>
<dbReference type="GO" id="GO:0000428">
    <property type="term" value="C:DNA-directed RNA polymerase complex"/>
    <property type="evidence" value="ECO:0007669"/>
    <property type="project" value="UniProtKB-KW"/>
</dbReference>
<dbReference type="GO" id="GO:0005739">
    <property type="term" value="C:mitochondrion"/>
    <property type="evidence" value="ECO:0007669"/>
    <property type="project" value="GOC"/>
</dbReference>
<dbReference type="GO" id="GO:0003677">
    <property type="term" value="F:DNA binding"/>
    <property type="evidence" value="ECO:0007669"/>
    <property type="project" value="UniProtKB-UniRule"/>
</dbReference>
<dbReference type="GO" id="GO:0003899">
    <property type="term" value="F:DNA-directed RNA polymerase activity"/>
    <property type="evidence" value="ECO:0007669"/>
    <property type="project" value="UniProtKB-UniRule"/>
</dbReference>
<dbReference type="GO" id="GO:0032549">
    <property type="term" value="F:ribonucleoside binding"/>
    <property type="evidence" value="ECO:0007669"/>
    <property type="project" value="InterPro"/>
</dbReference>
<dbReference type="GO" id="GO:0006351">
    <property type="term" value="P:DNA-templated transcription"/>
    <property type="evidence" value="ECO:0007669"/>
    <property type="project" value="UniProtKB-UniRule"/>
</dbReference>
<dbReference type="CDD" id="cd00653">
    <property type="entry name" value="RNA_pol_B_RPB2"/>
    <property type="match status" value="1"/>
</dbReference>
<dbReference type="FunFam" id="3.90.1110.10:FF:000009">
    <property type="entry name" value="DNA-directed RNA polymerase subunit beta"/>
    <property type="match status" value="1"/>
</dbReference>
<dbReference type="Gene3D" id="2.40.50.100">
    <property type="match status" value="1"/>
</dbReference>
<dbReference type="Gene3D" id="2.40.50.150">
    <property type="match status" value="1"/>
</dbReference>
<dbReference type="Gene3D" id="3.90.1100.10">
    <property type="match status" value="1"/>
</dbReference>
<dbReference type="Gene3D" id="2.30.150.10">
    <property type="entry name" value="DNA-directed RNA polymerase, beta subunit, external 1 domain"/>
    <property type="match status" value="1"/>
</dbReference>
<dbReference type="Gene3D" id="2.40.270.10">
    <property type="entry name" value="DNA-directed RNA polymerase, subunit 2, domain 6"/>
    <property type="match status" value="1"/>
</dbReference>
<dbReference type="Gene3D" id="3.90.1800.10">
    <property type="entry name" value="RNA polymerase alpha subunit dimerisation domain"/>
    <property type="match status" value="1"/>
</dbReference>
<dbReference type="Gene3D" id="3.90.1110.10">
    <property type="entry name" value="RNA polymerase Rpb2, domain 2"/>
    <property type="match status" value="1"/>
</dbReference>
<dbReference type="HAMAP" id="MF_01321">
    <property type="entry name" value="RNApol_bact_RpoB"/>
    <property type="match status" value="1"/>
</dbReference>
<dbReference type="InterPro" id="IPR042107">
    <property type="entry name" value="DNA-dir_RNA_pol_bsu_ext_1_sf"/>
</dbReference>
<dbReference type="InterPro" id="IPR015712">
    <property type="entry name" value="DNA-dir_RNA_pol_su2"/>
</dbReference>
<dbReference type="InterPro" id="IPR007120">
    <property type="entry name" value="DNA-dir_RNAP_su2_dom"/>
</dbReference>
<dbReference type="InterPro" id="IPR037033">
    <property type="entry name" value="DNA-dir_RNAP_su2_hyb_sf"/>
</dbReference>
<dbReference type="InterPro" id="IPR010243">
    <property type="entry name" value="RNA_pol_bsu_bac"/>
</dbReference>
<dbReference type="InterPro" id="IPR007121">
    <property type="entry name" value="RNA_pol_bsu_CS"/>
</dbReference>
<dbReference type="InterPro" id="IPR007642">
    <property type="entry name" value="RNA_pol_Rpb2_2"/>
</dbReference>
<dbReference type="InterPro" id="IPR037034">
    <property type="entry name" value="RNA_pol_Rpb2_2_sf"/>
</dbReference>
<dbReference type="InterPro" id="IPR007645">
    <property type="entry name" value="RNA_pol_Rpb2_3"/>
</dbReference>
<dbReference type="InterPro" id="IPR007641">
    <property type="entry name" value="RNA_pol_Rpb2_7"/>
</dbReference>
<dbReference type="InterPro" id="IPR014724">
    <property type="entry name" value="RNA_pol_RPB2_OB-fold"/>
</dbReference>
<dbReference type="NCBIfam" id="NF001616">
    <property type="entry name" value="PRK00405.1"/>
    <property type="match status" value="1"/>
</dbReference>
<dbReference type="PANTHER" id="PTHR20856">
    <property type="entry name" value="DNA-DIRECTED RNA POLYMERASE I SUBUNIT 2"/>
    <property type="match status" value="1"/>
</dbReference>
<dbReference type="Pfam" id="PF04561">
    <property type="entry name" value="RNA_pol_Rpb2_2"/>
    <property type="match status" value="1"/>
</dbReference>
<dbReference type="Pfam" id="PF04565">
    <property type="entry name" value="RNA_pol_Rpb2_3"/>
    <property type="match status" value="1"/>
</dbReference>
<dbReference type="Pfam" id="PF00562">
    <property type="entry name" value="RNA_pol_Rpb2_6"/>
    <property type="match status" value="1"/>
</dbReference>
<dbReference type="Pfam" id="PF04560">
    <property type="entry name" value="RNA_pol_Rpb2_7"/>
    <property type="match status" value="1"/>
</dbReference>
<dbReference type="SUPFAM" id="SSF64484">
    <property type="entry name" value="beta and beta-prime subunits of DNA dependent RNA-polymerase"/>
    <property type="match status" value="1"/>
</dbReference>
<dbReference type="PROSITE" id="PS01166">
    <property type="entry name" value="RNA_POL_BETA"/>
    <property type="match status" value="1"/>
</dbReference>
<evidence type="ECO:0000255" key="1">
    <source>
        <dbReference type="HAMAP-Rule" id="MF_01321"/>
    </source>
</evidence>
<accession>Q06H05</accession>